<keyword id="KW-0028">Amino-acid biosynthesis</keyword>
<keyword id="KW-0057">Aromatic amino acid biosynthesis</keyword>
<keyword id="KW-0456">Lyase</keyword>
<keyword id="KW-0663">Pyridoxal phosphate</keyword>
<keyword id="KW-0822">Tryptophan biosynthesis</keyword>
<evidence type="ECO:0000255" key="1">
    <source>
        <dbReference type="HAMAP-Rule" id="MF_00133"/>
    </source>
</evidence>
<name>TRPB_XANCB</name>
<feature type="chain" id="PRO_1000095837" description="Tryptophan synthase beta chain">
    <location>
        <begin position="1"/>
        <end position="405"/>
    </location>
</feature>
<feature type="modified residue" description="N6-(pyridoxal phosphate)lysine" evidence="1">
    <location>
        <position position="98"/>
    </location>
</feature>
<organism>
    <name type="scientific">Xanthomonas campestris pv. campestris (strain B100)</name>
    <dbReference type="NCBI Taxonomy" id="509169"/>
    <lineage>
        <taxon>Bacteria</taxon>
        <taxon>Pseudomonadati</taxon>
        <taxon>Pseudomonadota</taxon>
        <taxon>Gammaproteobacteria</taxon>
        <taxon>Lysobacterales</taxon>
        <taxon>Lysobacteraceae</taxon>
        <taxon>Xanthomonas</taxon>
    </lineage>
</organism>
<proteinExistence type="inferred from homology"/>
<protein>
    <recommendedName>
        <fullName evidence="1">Tryptophan synthase beta chain</fullName>
        <ecNumber evidence="1">4.2.1.20</ecNumber>
    </recommendedName>
</protein>
<reference key="1">
    <citation type="journal article" date="2008" name="J. Biotechnol.">
        <title>The genome of Xanthomonas campestris pv. campestris B100 and its use for the reconstruction of metabolic pathways involved in xanthan biosynthesis.</title>
        <authorList>
            <person name="Vorhoelter F.-J."/>
            <person name="Schneiker S."/>
            <person name="Goesmann A."/>
            <person name="Krause L."/>
            <person name="Bekel T."/>
            <person name="Kaiser O."/>
            <person name="Linke B."/>
            <person name="Patschkowski T."/>
            <person name="Rueckert C."/>
            <person name="Schmid J."/>
            <person name="Sidhu V.K."/>
            <person name="Sieber V."/>
            <person name="Tauch A."/>
            <person name="Watt S.A."/>
            <person name="Weisshaar B."/>
            <person name="Becker A."/>
            <person name="Niehaus K."/>
            <person name="Puehler A."/>
        </authorList>
    </citation>
    <scope>NUCLEOTIDE SEQUENCE [LARGE SCALE GENOMIC DNA]</scope>
    <source>
        <strain>B100</strain>
    </source>
</reference>
<sequence length="405" mass="43064">MSAQPISDFHAYPDAAGHFGKFGGRFVAETLIAPLQELSAAYDLARQDPAFIAEYDKDLKHYVGRPSPIYHAERLSREVGGAQILLKREDLNHTGAHKINNTIGQALLASRMGKTRIIAETGAGQHGVASATVAARLGLECVVYMGATDIERQKINVYRMQLLGAKVIPVTSGSATLKDALNEAMRDWVSNVQDTFYIIGTVAGPDPYPRMVRDFNAIVGREARAQMLEDYGRLPDAISACVGGGSNAIGLFHAFLNDPGVKIYGAEAAGDGIASGRHAASIAAGRPGVLHGNRTYVICDDDGQIIETHSVSAGLDYPGVGPEHAFLSDSGRAVYQGITDDEALAAFHLLAHTEGILAALESSHAVAQSIKLAREMPKDALVLCNLSGRGDKDVHTIAAREGMVL</sequence>
<dbReference type="EC" id="4.2.1.20" evidence="1"/>
<dbReference type="EMBL" id="AM920689">
    <property type="protein sequence ID" value="CAP50969.1"/>
    <property type="molecule type" value="Genomic_DNA"/>
</dbReference>
<dbReference type="SMR" id="B0RR84"/>
<dbReference type="KEGG" id="xca:xcc-b100_1619"/>
<dbReference type="HOGENOM" id="CLU_016734_3_1_6"/>
<dbReference type="UniPathway" id="UPA00035">
    <property type="reaction ID" value="UER00044"/>
</dbReference>
<dbReference type="Proteomes" id="UP000001188">
    <property type="component" value="Chromosome"/>
</dbReference>
<dbReference type="GO" id="GO:0005737">
    <property type="term" value="C:cytoplasm"/>
    <property type="evidence" value="ECO:0007669"/>
    <property type="project" value="TreeGrafter"/>
</dbReference>
<dbReference type="GO" id="GO:0004834">
    <property type="term" value="F:tryptophan synthase activity"/>
    <property type="evidence" value="ECO:0007669"/>
    <property type="project" value="UniProtKB-UniRule"/>
</dbReference>
<dbReference type="CDD" id="cd06446">
    <property type="entry name" value="Trp-synth_B"/>
    <property type="match status" value="1"/>
</dbReference>
<dbReference type="FunFam" id="3.40.50.1100:FF:000001">
    <property type="entry name" value="Tryptophan synthase beta chain"/>
    <property type="match status" value="1"/>
</dbReference>
<dbReference type="FunFam" id="3.40.50.1100:FF:000004">
    <property type="entry name" value="Tryptophan synthase beta chain"/>
    <property type="match status" value="1"/>
</dbReference>
<dbReference type="Gene3D" id="3.40.50.1100">
    <property type="match status" value="2"/>
</dbReference>
<dbReference type="HAMAP" id="MF_00133">
    <property type="entry name" value="Trp_synth_beta"/>
    <property type="match status" value="1"/>
</dbReference>
<dbReference type="InterPro" id="IPR006653">
    <property type="entry name" value="Trp_synth_b_CS"/>
</dbReference>
<dbReference type="InterPro" id="IPR006654">
    <property type="entry name" value="Trp_synth_beta"/>
</dbReference>
<dbReference type="InterPro" id="IPR023026">
    <property type="entry name" value="Trp_synth_beta/beta-like"/>
</dbReference>
<dbReference type="InterPro" id="IPR001926">
    <property type="entry name" value="TrpB-like_PALP"/>
</dbReference>
<dbReference type="InterPro" id="IPR036052">
    <property type="entry name" value="TrpB-like_PALP_sf"/>
</dbReference>
<dbReference type="NCBIfam" id="TIGR00263">
    <property type="entry name" value="trpB"/>
    <property type="match status" value="1"/>
</dbReference>
<dbReference type="PANTHER" id="PTHR48077:SF3">
    <property type="entry name" value="TRYPTOPHAN SYNTHASE"/>
    <property type="match status" value="1"/>
</dbReference>
<dbReference type="PANTHER" id="PTHR48077">
    <property type="entry name" value="TRYPTOPHAN SYNTHASE-RELATED"/>
    <property type="match status" value="1"/>
</dbReference>
<dbReference type="Pfam" id="PF00291">
    <property type="entry name" value="PALP"/>
    <property type="match status" value="1"/>
</dbReference>
<dbReference type="PIRSF" id="PIRSF001413">
    <property type="entry name" value="Trp_syn_beta"/>
    <property type="match status" value="1"/>
</dbReference>
<dbReference type="SUPFAM" id="SSF53686">
    <property type="entry name" value="Tryptophan synthase beta subunit-like PLP-dependent enzymes"/>
    <property type="match status" value="1"/>
</dbReference>
<dbReference type="PROSITE" id="PS00168">
    <property type="entry name" value="TRP_SYNTHASE_BETA"/>
    <property type="match status" value="1"/>
</dbReference>
<comment type="function">
    <text evidence="1">The beta subunit is responsible for the synthesis of L-tryptophan from indole and L-serine.</text>
</comment>
<comment type="catalytic activity">
    <reaction evidence="1">
        <text>(1S,2R)-1-C-(indol-3-yl)glycerol 3-phosphate + L-serine = D-glyceraldehyde 3-phosphate + L-tryptophan + H2O</text>
        <dbReference type="Rhea" id="RHEA:10532"/>
        <dbReference type="ChEBI" id="CHEBI:15377"/>
        <dbReference type="ChEBI" id="CHEBI:33384"/>
        <dbReference type="ChEBI" id="CHEBI:57912"/>
        <dbReference type="ChEBI" id="CHEBI:58866"/>
        <dbReference type="ChEBI" id="CHEBI:59776"/>
        <dbReference type="EC" id="4.2.1.20"/>
    </reaction>
</comment>
<comment type="cofactor">
    <cofactor evidence="1">
        <name>pyridoxal 5'-phosphate</name>
        <dbReference type="ChEBI" id="CHEBI:597326"/>
    </cofactor>
</comment>
<comment type="pathway">
    <text evidence="1">Amino-acid biosynthesis; L-tryptophan biosynthesis; L-tryptophan from chorismate: step 5/5.</text>
</comment>
<comment type="subunit">
    <text evidence="1">Tetramer of two alpha and two beta chains.</text>
</comment>
<comment type="similarity">
    <text evidence="1">Belongs to the TrpB family.</text>
</comment>
<accession>B0RR84</accession>
<gene>
    <name evidence="1" type="primary">trpB</name>
    <name type="ordered locus">xcc-b100_1619</name>
</gene>